<organism>
    <name type="scientific">Shewanella woodyi (strain ATCC 51908 / MS32)</name>
    <dbReference type="NCBI Taxonomy" id="392500"/>
    <lineage>
        <taxon>Bacteria</taxon>
        <taxon>Pseudomonadati</taxon>
        <taxon>Pseudomonadota</taxon>
        <taxon>Gammaproteobacteria</taxon>
        <taxon>Alteromonadales</taxon>
        <taxon>Shewanellaceae</taxon>
        <taxon>Shewanella</taxon>
    </lineage>
</organism>
<reference key="1">
    <citation type="submission" date="2008-02" db="EMBL/GenBank/DDBJ databases">
        <title>Complete sequence of Shewanella woodyi ATCC 51908.</title>
        <authorList>
            <consortium name="US DOE Joint Genome Institute"/>
            <person name="Copeland A."/>
            <person name="Lucas S."/>
            <person name="Lapidus A."/>
            <person name="Glavina del Rio T."/>
            <person name="Dalin E."/>
            <person name="Tice H."/>
            <person name="Bruce D."/>
            <person name="Goodwin L."/>
            <person name="Pitluck S."/>
            <person name="Sims D."/>
            <person name="Brettin T."/>
            <person name="Detter J.C."/>
            <person name="Han C."/>
            <person name="Kuske C.R."/>
            <person name="Schmutz J."/>
            <person name="Larimer F."/>
            <person name="Land M."/>
            <person name="Hauser L."/>
            <person name="Kyrpides N."/>
            <person name="Lykidis A."/>
            <person name="Zhao J.-S."/>
            <person name="Richardson P."/>
        </authorList>
    </citation>
    <scope>NUCLEOTIDE SEQUENCE [LARGE SCALE GENOMIC DNA]</scope>
    <source>
        <strain>ATCC 51908 / MS32</strain>
    </source>
</reference>
<proteinExistence type="inferred from homology"/>
<keyword id="KW-0456">Lyase</keyword>
<keyword id="KW-0460">Magnesium</keyword>
<keyword id="KW-0464">Manganese</keyword>
<keyword id="KW-0479">Metal-binding</keyword>
<keyword id="KW-1185">Reference proteome</keyword>
<keyword id="KW-0686">Riboflavin biosynthesis</keyword>
<evidence type="ECO:0000255" key="1">
    <source>
        <dbReference type="HAMAP-Rule" id="MF_00180"/>
    </source>
</evidence>
<gene>
    <name evidence="1" type="primary">ribB</name>
    <name type="ordered locus">Swoo_4764</name>
</gene>
<dbReference type="EC" id="4.1.99.12" evidence="1"/>
<dbReference type="EMBL" id="CP000961">
    <property type="protein sequence ID" value="ACA89013.1"/>
    <property type="molecule type" value="Genomic_DNA"/>
</dbReference>
<dbReference type="RefSeq" id="WP_012327330.1">
    <property type="nucleotide sequence ID" value="NC_010506.1"/>
</dbReference>
<dbReference type="SMR" id="B1KNY2"/>
<dbReference type="STRING" id="392500.Swoo_4764"/>
<dbReference type="KEGG" id="swd:Swoo_4764"/>
<dbReference type="eggNOG" id="COG0108">
    <property type="taxonomic scope" value="Bacteria"/>
</dbReference>
<dbReference type="HOGENOM" id="CLU_020273_3_0_6"/>
<dbReference type="UniPathway" id="UPA00275">
    <property type="reaction ID" value="UER00399"/>
</dbReference>
<dbReference type="Proteomes" id="UP000002168">
    <property type="component" value="Chromosome"/>
</dbReference>
<dbReference type="GO" id="GO:0005829">
    <property type="term" value="C:cytosol"/>
    <property type="evidence" value="ECO:0007669"/>
    <property type="project" value="TreeGrafter"/>
</dbReference>
<dbReference type="GO" id="GO:0008686">
    <property type="term" value="F:3,4-dihydroxy-2-butanone-4-phosphate synthase activity"/>
    <property type="evidence" value="ECO:0007669"/>
    <property type="project" value="UniProtKB-UniRule"/>
</dbReference>
<dbReference type="GO" id="GO:0000287">
    <property type="term" value="F:magnesium ion binding"/>
    <property type="evidence" value="ECO:0007669"/>
    <property type="project" value="UniProtKB-UniRule"/>
</dbReference>
<dbReference type="GO" id="GO:0030145">
    <property type="term" value="F:manganese ion binding"/>
    <property type="evidence" value="ECO:0007669"/>
    <property type="project" value="UniProtKB-UniRule"/>
</dbReference>
<dbReference type="GO" id="GO:0009231">
    <property type="term" value="P:riboflavin biosynthetic process"/>
    <property type="evidence" value="ECO:0007669"/>
    <property type="project" value="UniProtKB-UniRule"/>
</dbReference>
<dbReference type="FunFam" id="3.90.870.10:FF:000002">
    <property type="entry name" value="3,4-dihydroxy-2-butanone 4-phosphate synthase"/>
    <property type="match status" value="1"/>
</dbReference>
<dbReference type="Gene3D" id="3.90.870.10">
    <property type="entry name" value="DHBP synthase"/>
    <property type="match status" value="1"/>
</dbReference>
<dbReference type="HAMAP" id="MF_00180">
    <property type="entry name" value="RibB"/>
    <property type="match status" value="1"/>
</dbReference>
<dbReference type="InterPro" id="IPR017945">
    <property type="entry name" value="DHBP_synth_RibB-like_a/b_dom"/>
</dbReference>
<dbReference type="InterPro" id="IPR000422">
    <property type="entry name" value="DHBP_synthase_RibB"/>
</dbReference>
<dbReference type="NCBIfam" id="TIGR00506">
    <property type="entry name" value="ribB"/>
    <property type="match status" value="1"/>
</dbReference>
<dbReference type="PANTHER" id="PTHR21327:SF38">
    <property type="entry name" value="3,4-DIHYDROXY-2-BUTANONE 4-PHOSPHATE SYNTHASE"/>
    <property type="match status" value="1"/>
</dbReference>
<dbReference type="PANTHER" id="PTHR21327">
    <property type="entry name" value="GTP CYCLOHYDROLASE II-RELATED"/>
    <property type="match status" value="1"/>
</dbReference>
<dbReference type="Pfam" id="PF00926">
    <property type="entry name" value="DHBP_synthase"/>
    <property type="match status" value="1"/>
</dbReference>
<dbReference type="SUPFAM" id="SSF55821">
    <property type="entry name" value="YrdC/RibB"/>
    <property type="match status" value="1"/>
</dbReference>
<accession>B1KNY2</accession>
<feature type="chain" id="PRO_1000098291" description="3,4-dihydroxy-2-butanone 4-phosphate synthase">
    <location>
        <begin position="1"/>
        <end position="217"/>
    </location>
</feature>
<feature type="binding site" evidence="1">
    <location>
        <begin position="37"/>
        <end position="38"/>
    </location>
    <ligand>
        <name>D-ribulose 5-phosphate</name>
        <dbReference type="ChEBI" id="CHEBI:58121"/>
    </ligand>
</feature>
<feature type="binding site" evidence="1">
    <location>
        <position position="38"/>
    </location>
    <ligand>
        <name>Mg(2+)</name>
        <dbReference type="ChEBI" id="CHEBI:18420"/>
        <label>1</label>
    </ligand>
</feature>
<feature type="binding site" evidence="1">
    <location>
        <position position="38"/>
    </location>
    <ligand>
        <name>Mg(2+)</name>
        <dbReference type="ChEBI" id="CHEBI:18420"/>
        <label>2</label>
    </ligand>
</feature>
<feature type="binding site" evidence="1">
    <location>
        <position position="42"/>
    </location>
    <ligand>
        <name>D-ribulose 5-phosphate</name>
        <dbReference type="ChEBI" id="CHEBI:58121"/>
    </ligand>
</feature>
<feature type="binding site" evidence="1">
    <location>
        <begin position="150"/>
        <end position="154"/>
    </location>
    <ligand>
        <name>D-ribulose 5-phosphate</name>
        <dbReference type="ChEBI" id="CHEBI:58121"/>
    </ligand>
</feature>
<feature type="binding site" evidence="1">
    <location>
        <position position="153"/>
    </location>
    <ligand>
        <name>Mg(2+)</name>
        <dbReference type="ChEBI" id="CHEBI:18420"/>
        <label>2</label>
    </ligand>
</feature>
<feature type="binding site" evidence="1">
    <location>
        <position position="174"/>
    </location>
    <ligand>
        <name>D-ribulose 5-phosphate</name>
        <dbReference type="ChEBI" id="CHEBI:58121"/>
    </ligand>
</feature>
<feature type="site" description="Essential for catalytic activity" evidence="1">
    <location>
        <position position="136"/>
    </location>
</feature>
<feature type="site" description="Essential for catalytic activity" evidence="1">
    <location>
        <position position="174"/>
    </location>
</feature>
<name>RIBB_SHEWM</name>
<protein>
    <recommendedName>
        <fullName evidence="1">3,4-dihydroxy-2-butanone 4-phosphate synthase</fullName>
        <shortName evidence="1">DHBP synthase</shortName>
        <ecNumber evidence="1">4.1.99.12</ecNumber>
    </recommendedName>
</protein>
<comment type="function">
    <text evidence="1">Catalyzes the conversion of D-ribulose 5-phosphate to formate and 3,4-dihydroxy-2-butanone 4-phosphate.</text>
</comment>
<comment type="catalytic activity">
    <reaction evidence="1">
        <text>D-ribulose 5-phosphate = (2S)-2-hydroxy-3-oxobutyl phosphate + formate + H(+)</text>
        <dbReference type="Rhea" id="RHEA:18457"/>
        <dbReference type="ChEBI" id="CHEBI:15378"/>
        <dbReference type="ChEBI" id="CHEBI:15740"/>
        <dbReference type="ChEBI" id="CHEBI:58121"/>
        <dbReference type="ChEBI" id="CHEBI:58830"/>
        <dbReference type="EC" id="4.1.99.12"/>
    </reaction>
</comment>
<comment type="cofactor">
    <cofactor evidence="1">
        <name>Mg(2+)</name>
        <dbReference type="ChEBI" id="CHEBI:18420"/>
    </cofactor>
    <cofactor evidence="1">
        <name>Mn(2+)</name>
        <dbReference type="ChEBI" id="CHEBI:29035"/>
    </cofactor>
    <text evidence="1">Binds 2 divalent metal cations per subunit. Magnesium or manganese.</text>
</comment>
<comment type="pathway">
    <text evidence="1">Cofactor biosynthesis; riboflavin biosynthesis; 2-hydroxy-3-oxobutyl phosphate from D-ribulose 5-phosphate: step 1/1.</text>
</comment>
<comment type="subunit">
    <text evidence="1">Homodimer.</text>
</comment>
<comment type="similarity">
    <text evidence="1">Belongs to the DHBP synthase family.</text>
</comment>
<sequence>MNQSLLTPFGTAIERVEAALTSLRQGQGVLVVDDEDRENEGDLIYSAQSLTNEQMALLIRECSGIVCLCLTDERIKQLDLPPMVEDNSSQYGTAFTVSIEAKVGVTTGVSAADRVTTIKAAIADNAVPEDLARPGHVYPLRAQSGGVFSRRGHTEGTIDLMLLAGLKPAGVLCEITNPDGTMARLPEIIQFGQQHNLPVLTIEDIVEYRKVTMEKAS</sequence>